<protein>
    <recommendedName>
        <fullName evidence="1">Shikimate kinase</fullName>
        <shortName evidence="1">SK</shortName>
        <ecNumber evidence="1">2.7.1.71</ecNumber>
    </recommendedName>
</protein>
<dbReference type="EC" id="2.7.1.71" evidence="1"/>
<dbReference type="EMBL" id="CP001019">
    <property type="protein sequence ID" value="ACJ17706.1"/>
    <property type="molecule type" value="Genomic_DNA"/>
</dbReference>
<dbReference type="RefSeq" id="WP_010958519.1">
    <property type="nucleotide sequence ID" value="NC_011527.1"/>
</dbReference>
<dbReference type="SMR" id="B6J3I0"/>
<dbReference type="KEGG" id="cbg:CbuG_0266"/>
<dbReference type="HOGENOM" id="CLU_057607_2_2_6"/>
<dbReference type="UniPathway" id="UPA00053">
    <property type="reaction ID" value="UER00088"/>
</dbReference>
<dbReference type="GO" id="GO:0005829">
    <property type="term" value="C:cytosol"/>
    <property type="evidence" value="ECO:0007669"/>
    <property type="project" value="TreeGrafter"/>
</dbReference>
<dbReference type="GO" id="GO:0005524">
    <property type="term" value="F:ATP binding"/>
    <property type="evidence" value="ECO:0007669"/>
    <property type="project" value="UniProtKB-UniRule"/>
</dbReference>
<dbReference type="GO" id="GO:0000287">
    <property type="term" value="F:magnesium ion binding"/>
    <property type="evidence" value="ECO:0007669"/>
    <property type="project" value="UniProtKB-UniRule"/>
</dbReference>
<dbReference type="GO" id="GO:0004765">
    <property type="term" value="F:shikimate kinase activity"/>
    <property type="evidence" value="ECO:0007669"/>
    <property type="project" value="UniProtKB-UniRule"/>
</dbReference>
<dbReference type="GO" id="GO:0008652">
    <property type="term" value="P:amino acid biosynthetic process"/>
    <property type="evidence" value="ECO:0007669"/>
    <property type="project" value="UniProtKB-KW"/>
</dbReference>
<dbReference type="GO" id="GO:0009073">
    <property type="term" value="P:aromatic amino acid family biosynthetic process"/>
    <property type="evidence" value="ECO:0007669"/>
    <property type="project" value="UniProtKB-KW"/>
</dbReference>
<dbReference type="GO" id="GO:0009423">
    <property type="term" value="P:chorismate biosynthetic process"/>
    <property type="evidence" value="ECO:0007669"/>
    <property type="project" value="UniProtKB-UniRule"/>
</dbReference>
<dbReference type="CDD" id="cd00464">
    <property type="entry name" value="SK"/>
    <property type="match status" value="1"/>
</dbReference>
<dbReference type="FunFam" id="3.40.50.300:FF:003599">
    <property type="entry name" value="Shikimate kinase"/>
    <property type="match status" value="1"/>
</dbReference>
<dbReference type="Gene3D" id="3.40.50.300">
    <property type="entry name" value="P-loop containing nucleotide triphosphate hydrolases"/>
    <property type="match status" value="1"/>
</dbReference>
<dbReference type="HAMAP" id="MF_00109">
    <property type="entry name" value="Shikimate_kinase"/>
    <property type="match status" value="1"/>
</dbReference>
<dbReference type="InterPro" id="IPR027417">
    <property type="entry name" value="P-loop_NTPase"/>
</dbReference>
<dbReference type="InterPro" id="IPR031322">
    <property type="entry name" value="Shikimate/glucono_kinase"/>
</dbReference>
<dbReference type="InterPro" id="IPR000623">
    <property type="entry name" value="Shikimate_kinase/TSH1"/>
</dbReference>
<dbReference type="InterPro" id="IPR023000">
    <property type="entry name" value="Shikimate_kinase_CS"/>
</dbReference>
<dbReference type="PANTHER" id="PTHR21087">
    <property type="entry name" value="SHIKIMATE KINASE"/>
    <property type="match status" value="1"/>
</dbReference>
<dbReference type="PANTHER" id="PTHR21087:SF16">
    <property type="entry name" value="SHIKIMATE KINASE 1, CHLOROPLASTIC"/>
    <property type="match status" value="1"/>
</dbReference>
<dbReference type="Pfam" id="PF01202">
    <property type="entry name" value="SKI"/>
    <property type="match status" value="1"/>
</dbReference>
<dbReference type="PRINTS" id="PR01100">
    <property type="entry name" value="SHIKIMTKNASE"/>
</dbReference>
<dbReference type="SUPFAM" id="SSF52540">
    <property type="entry name" value="P-loop containing nucleoside triphosphate hydrolases"/>
    <property type="match status" value="1"/>
</dbReference>
<dbReference type="PROSITE" id="PS01128">
    <property type="entry name" value="SHIKIMATE_KINASE"/>
    <property type="match status" value="1"/>
</dbReference>
<accession>B6J3I0</accession>
<comment type="function">
    <text evidence="1">Catalyzes the specific phosphorylation of the 3-hydroxyl group of shikimic acid using ATP as a cosubstrate.</text>
</comment>
<comment type="catalytic activity">
    <reaction evidence="1">
        <text>shikimate + ATP = 3-phosphoshikimate + ADP + H(+)</text>
        <dbReference type="Rhea" id="RHEA:13121"/>
        <dbReference type="ChEBI" id="CHEBI:15378"/>
        <dbReference type="ChEBI" id="CHEBI:30616"/>
        <dbReference type="ChEBI" id="CHEBI:36208"/>
        <dbReference type="ChEBI" id="CHEBI:145989"/>
        <dbReference type="ChEBI" id="CHEBI:456216"/>
        <dbReference type="EC" id="2.7.1.71"/>
    </reaction>
</comment>
<comment type="cofactor">
    <cofactor evidence="1">
        <name>Mg(2+)</name>
        <dbReference type="ChEBI" id="CHEBI:18420"/>
    </cofactor>
    <text evidence="1">Binds 1 Mg(2+) ion per subunit.</text>
</comment>
<comment type="pathway">
    <text evidence="1">Metabolic intermediate biosynthesis; chorismate biosynthesis; chorismate from D-erythrose 4-phosphate and phosphoenolpyruvate: step 5/7.</text>
</comment>
<comment type="subunit">
    <text evidence="1">Monomer.</text>
</comment>
<comment type="subcellular location">
    <subcellularLocation>
        <location evidence="1">Cytoplasm</location>
    </subcellularLocation>
</comment>
<comment type="similarity">
    <text evidence="1">Belongs to the shikimate kinase family.</text>
</comment>
<proteinExistence type="inferred from homology"/>
<feature type="chain" id="PRO_1000094386" description="Shikimate kinase">
    <location>
        <begin position="1"/>
        <end position="179"/>
    </location>
</feature>
<feature type="binding site" evidence="1">
    <location>
        <begin position="15"/>
        <end position="20"/>
    </location>
    <ligand>
        <name>ATP</name>
        <dbReference type="ChEBI" id="CHEBI:30616"/>
    </ligand>
</feature>
<feature type="binding site" evidence="1">
    <location>
        <position position="19"/>
    </location>
    <ligand>
        <name>Mg(2+)</name>
        <dbReference type="ChEBI" id="CHEBI:18420"/>
    </ligand>
</feature>
<feature type="binding site" evidence="1">
    <location>
        <position position="37"/>
    </location>
    <ligand>
        <name>substrate</name>
    </ligand>
</feature>
<feature type="binding site" evidence="1">
    <location>
        <position position="61"/>
    </location>
    <ligand>
        <name>substrate</name>
    </ligand>
</feature>
<feature type="binding site" evidence="1">
    <location>
        <position position="83"/>
    </location>
    <ligand>
        <name>substrate</name>
    </ligand>
</feature>
<feature type="binding site" evidence="1">
    <location>
        <position position="123"/>
    </location>
    <ligand>
        <name>ATP</name>
        <dbReference type="ChEBI" id="CHEBI:30616"/>
    </ligand>
</feature>
<feature type="binding site" evidence="1">
    <location>
        <position position="142"/>
    </location>
    <ligand>
        <name>substrate</name>
    </ligand>
</feature>
<evidence type="ECO:0000255" key="1">
    <source>
        <dbReference type="HAMAP-Rule" id="MF_00109"/>
    </source>
</evidence>
<keyword id="KW-0028">Amino-acid biosynthesis</keyword>
<keyword id="KW-0057">Aromatic amino acid biosynthesis</keyword>
<keyword id="KW-0067">ATP-binding</keyword>
<keyword id="KW-0963">Cytoplasm</keyword>
<keyword id="KW-0418">Kinase</keyword>
<keyword id="KW-0460">Magnesium</keyword>
<keyword id="KW-0479">Metal-binding</keyword>
<keyword id="KW-0547">Nucleotide-binding</keyword>
<keyword id="KW-0808">Transferase</keyword>
<sequence length="179" mass="20335">MKKNLTNIYLIGLMGAGKTSVGSQLAKLTKRILYDSDKEIEKRTGADIAWIFEMEGEAGFRRREREMIEALCKLDNIILATGGGVVLDEKNRQQISETGVVIYLTASIDTQLKRIGQKGEMRRPLFIKNNSKEKLQQLNEIRKPLYQAMADLVYPTDDLNPRQLATQILVDIKQTYSDL</sequence>
<organism>
    <name type="scientific">Coxiella burnetii (strain CbuG_Q212)</name>
    <name type="common">Coxiella burnetii (strain Q212)</name>
    <dbReference type="NCBI Taxonomy" id="434923"/>
    <lineage>
        <taxon>Bacteria</taxon>
        <taxon>Pseudomonadati</taxon>
        <taxon>Pseudomonadota</taxon>
        <taxon>Gammaproteobacteria</taxon>
        <taxon>Legionellales</taxon>
        <taxon>Coxiellaceae</taxon>
        <taxon>Coxiella</taxon>
    </lineage>
</organism>
<reference key="1">
    <citation type="journal article" date="2009" name="Infect. Immun.">
        <title>Comparative genomics reveal extensive transposon-mediated genomic plasticity and diversity among potential effector proteins within the genus Coxiella.</title>
        <authorList>
            <person name="Beare P.A."/>
            <person name="Unsworth N."/>
            <person name="Andoh M."/>
            <person name="Voth D.E."/>
            <person name="Omsland A."/>
            <person name="Gilk S.D."/>
            <person name="Williams K.P."/>
            <person name="Sobral B.W."/>
            <person name="Kupko J.J. III"/>
            <person name="Porcella S.F."/>
            <person name="Samuel J.E."/>
            <person name="Heinzen R.A."/>
        </authorList>
    </citation>
    <scope>NUCLEOTIDE SEQUENCE [LARGE SCALE GENOMIC DNA]</scope>
    <source>
        <strain>CbuG_Q212</strain>
    </source>
</reference>
<gene>
    <name evidence="1" type="primary">aroK</name>
    <name type="ordered locus">CbuG_0266</name>
</gene>
<name>AROK_COXB2</name>